<dbReference type="EMBL" id="AP007255">
    <property type="protein sequence ID" value="BAE51921.1"/>
    <property type="molecule type" value="Genomic_DNA"/>
</dbReference>
<dbReference type="RefSeq" id="WP_011385491.1">
    <property type="nucleotide sequence ID" value="NC_007626.1"/>
</dbReference>
<dbReference type="SMR" id="Q2W2K4"/>
<dbReference type="STRING" id="342108.amb3117"/>
<dbReference type="KEGG" id="mag:amb3117"/>
<dbReference type="HOGENOM" id="CLU_139869_0_1_5"/>
<dbReference type="OrthoDB" id="9810484at2"/>
<dbReference type="Proteomes" id="UP000007058">
    <property type="component" value="Chromosome"/>
</dbReference>
<dbReference type="GO" id="GO:0005737">
    <property type="term" value="C:cytoplasm"/>
    <property type="evidence" value="ECO:0007669"/>
    <property type="project" value="UniProtKB-ARBA"/>
</dbReference>
<dbReference type="GO" id="GO:0015935">
    <property type="term" value="C:small ribosomal subunit"/>
    <property type="evidence" value="ECO:0007669"/>
    <property type="project" value="TreeGrafter"/>
</dbReference>
<dbReference type="GO" id="GO:0019843">
    <property type="term" value="F:rRNA binding"/>
    <property type="evidence" value="ECO:0007669"/>
    <property type="project" value="UniProtKB-UniRule"/>
</dbReference>
<dbReference type="GO" id="GO:0003735">
    <property type="term" value="F:structural constituent of ribosome"/>
    <property type="evidence" value="ECO:0007669"/>
    <property type="project" value="InterPro"/>
</dbReference>
<dbReference type="GO" id="GO:0006412">
    <property type="term" value="P:translation"/>
    <property type="evidence" value="ECO:0007669"/>
    <property type="project" value="UniProtKB-UniRule"/>
</dbReference>
<dbReference type="FunFam" id="1.10.287.1480:FF:000001">
    <property type="entry name" value="30S ribosomal protein S14"/>
    <property type="match status" value="1"/>
</dbReference>
<dbReference type="Gene3D" id="1.10.287.1480">
    <property type="match status" value="1"/>
</dbReference>
<dbReference type="HAMAP" id="MF_00537">
    <property type="entry name" value="Ribosomal_uS14_1"/>
    <property type="match status" value="1"/>
</dbReference>
<dbReference type="InterPro" id="IPR001209">
    <property type="entry name" value="Ribosomal_uS14"/>
</dbReference>
<dbReference type="InterPro" id="IPR023036">
    <property type="entry name" value="Ribosomal_uS14_bac/plastid"/>
</dbReference>
<dbReference type="InterPro" id="IPR018271">
    <property type="entry name" value="Ribosomal_uS14_CS"/>
</dbReference>
<dbReference type="NCBIfam" id="NF006477">
    <property type="entry name" value="PRK08881.1"/>
    <property type="match status" value="1"/>
</dbReference>
<dbReference type="PANTHER" id="PTHR19836">
    <property type="entry name" value="30S RIBOSOMAL PROTEIN S14"/>
    <property type="match status" value="1"/>
</dbReference>
<dbReference type="PANTHER" id="PTHR19836:SF19">
    <property type="entry name" value="SMALL RIBOSOMAL SUBUNIT PROTEIN US14M"/>
    <property type="match status" value="1"/>
</dbReference>
<dbReference type="Pfam" id="PF00253">
    <property type="entry name" value="Ribosomal_S14"/>
    <property type="match status" value="1"/>
</dbReference>
<dbReference type="SUPFAM" id="SSF57716">
    <property type="entry name" value="Glucocorticoid receptor-like (DNA-binding domain)"/>
    <property type="match status" value="1"/>
</dbReference>
<dbReference type="PROSITE" id="PS00527">
    <property type="entry name" value="RIBOSOMAL_S14"/>
    <property type="match status" value="1"/>
</dbReference>
<name>RS14_PARM1</name>
<reference key="1">
    <citation type="journal article" date="2005" name="DNA Res.">
        <title>Complete genome sequence of the facultative anaerobic magnetotactic bacterium Magnetospirillum sp. strain AMB-1.</title>
        <authorList>
            <person name="Matsunaga T."/>
            <person name="Okamura Y."/>
            <person name="Fukuda Y."/>
            <person name="Wahyudi A.T."/>
            <person name="Murase Y."/>
            <person name="Takeyama H."/>
        </authorList>
    </citation>
    <scope>NUCLEOTIDE SEQUENCE [LARGE SCALE GENOMIC DNA]</scope>
    <source>
        <strain>ATCC 700264 / AMB-1</strain>
    </source>
</reference>
<accession>Q2W2K4</accession>
<evidence type="ECO:0000255" key="1">
    <source>
        <dbReference type="HAMAP-Rule" id="MF_00537"/>
    </source>
</evidence>
<evidence type="ECO:0000305" key="2"/>
<keyword id="KW-0687">Ribonucleoprotein</keyword>
<keyword id="KW-0689">Ribosomal protein</keyword>
<keyword id="KW-0694">RNA-binding</keyword>
<keyword id="KW-0699">rRNA-binding</keyword>
<comment type="function">
    <text evidence="1">Binds 16S rRNA, required for the assembly of 30S particles and may also be responsible for determining the conformation of the 16S rRNA at the A site.</text>
</comment>
<comment type="subunit">
    <text evidence="1">Part of the 30S ribosomal subunit. Contacts proteins S3 and S10.</text>
</comment>
<comment type="similarity">
    <text evidence="1">Belongs to the universal ribosomal protein uS14 family.</text>
</comment>
<sequence length="101" mass="11632">MAKISSVERNKKRERMAAQFAARRAKLKAIANNREASPEERFEASLKLAELPRNSAKIRVRLRCEVTGRSRGNYRKFKLCRNKLRELASQGQIPGMVKSSW</sequence>
<protein>
    <recommendedName>
        <fullName evidence="1">Small ribosomal subunit protein uS14</fullName>
    </recommendedName>
    <alternativeName>
        <fullName evidence="2">30S ribosomal protein S14</fullName>
    </alternativeName>
</protein>
<gene>
    <name evidence="1" type="primary">rpsN</name>
    <name type="ordered locus">amb3117</name>
</gene>
<organism>
    <name type="scientific">Paramagnetospirillum magneticum (strain ATCC 700264 / AMB-1)</name>
    <name type="common">Magnetospirillum magneticum</name>
    <dbReference type="NCBI Taxonomy" id="342108"/>
    <lineage>
        <taxon>Bacteria</taxon>
        <taxon>Pseudomonadati</taxon>
        <taxon>Pseudomonadota</taxon>
        <taxon>Alphaproteobacteria</taxon>
        <taxon>Rhodospirillales</taxon>
        <taxon>Magnetospirillaceae</taxon>
        <taxon>Paramagnetospirillum</taxon>
    </lineage>
</organism>
<proteinExistence type="inferred from homology"/>
<feature type="chain" id="PRO_1000128438" description="Small ribosomal subunit protein uS14">
    <location>
        <begin position="1"/>
        <end position="101"/>
    </location>
</feature>